<sequence>MAKLSKRARLIREKVDVTKEYDINEAVSLLKEFATANFRESVDVAVNLGIDARKSDQNVRGATVLPNGTGREVRVAVFTQGENAEKAKAAGADIVGMEDLAAQVKAGEMNFDVVIASPDAMRVVGQLGQILGPRGLMPNPKVGTVTPDVAGAVKNAKSGQIRYRNDKNGIIHTTIGKADFEPAQLQENLESLLEALKKAKPANAKGQYLKKVSLSTTMGAGVVVNQATLTQA</sequence>
<dbReference type="EMBL" id="CP000083">
    <property type="protein sequence ID" value="AAZ24824.1"/>
    <property type="molecule type" value="Genomic_DNA"/>
</dbReference>
<dbReference type="RefSeq" id="WP_011045497.1">
    <property type="nucleotide sequence ID" value="NC_003910.7"/>
</dbReference>
<dbReference type="SMR" id="Q47UV6"/>
<dbReference type="STRING" id="167879.CPS_4772"/>
<dbReference type="KEGG" id="cps:CPS_4772"/>
<dbReference type="eggNOG" id="COG0081">
    <property type="taxonomic scope" value="Bacteria"/>
</dbReference>
<dbReference type="HOGENOM" id="CLU_062853_0_0_6"/>
<dbReference type="Proteomes" id="UP000000547">
    <property type="component" value="Chromosome"/>
</dbReference>
<dbReference type="GO" id="GO:0022625">
    <property type="term" value="C:cytosolic large ribosomal subunit"/>
    <property type="evidence" value="ECO:0007669"/>
    <property type="project" value="TreeGrafter"/>
</dbReference>
<dbReference type="GO" id="GO:0019843">
    <property type="term" value="F:rRNA binding"/>
    <property type="evidence" value="ECO:0007669"/>
    <property type="project" value="UniProtKB-UniRule"/>
</dbReference>
<dbReference type="GO" id="GO:0003735">
    <property type="term" value="F:structural constituent of ribosome"/>
    <property type="evidence" value="ECO:0007669"/>
    <property type="project" value="InterPro"/>
</dbReference>
<dbReference type="GO" id="GO:0000049">
    <property type="term" value="F:tRNA binding"/>
    <property type="evidence" value="ECO:0007669"/>
    <property type="project" value="UniProtKB-KW"/>
</dbReference>
<dbReference type="GO" id="GO:0006417">
    <property type="term" value="P:regulation of translation"/>
    <property type="evidence" value="ECO:0007669"/>
    <property type="project" value="UniProtKB-KW"/>
</dbReference>
<dbReference type="GO" id="GO:0006412">
    <property type="term" value="P:translation"/>
    <property type="evidence" value="ECO:0007669"/>
    <property type="project" value="UniProtKB-UniRule"/>
</dbReference>
<dbReference type="CDD" id="cd00403">
    <property type="entry name" value="Ribosomal_L1"/>
    <property type="match status" value="1"/>
</dbReference>
<dbReference type="FunFam" id="3.40.50.790:FF:000001">
    <property type="entry name" value="50S ribosomal protein L1"/>
    <property type="match status" value="1"/>
</dbReference>
<dbReference type="Gene3D" id="3.30.190.20">
    <property type="match status" value="1"/>
</dbReference>
<dbReference type="Gene3D" id="3.40.50.790">
    <property type="match status" value="1"/>
</dbReference>
<dbReference type="HAMAP" id="MF_01318_B">
    <property type="entry name" value="Ribosomal_uL1_B"/>
    <property type="match status" value="1"/>
</dbReference>
<dbReference type="InterPro" id="IPR005878">
    <property type="entry name" value="Ribosom_uL1_bac-type"/>
</dbReference>
<dbReference type="InterPro" id="IPR002143">
    <property type="entry name" value="Ribosomal_uL1"/>
</dbReference>
<dbReference type="InterPro" id="IPR023674">
    <property type="entry name" value="Ribosomal_uL1-like"/>
</dbReference>
<dbReference type="InterPro" id="IPR028364">
    <property type="entry name" value="Ribosomal_uL1/biogenesis"/>
</dbReference>
<dbReference type="InterPro" id="IPR016095">
    <property type="entry name" value="Ribosomal_uL1_3-a/b-sand"/>
</dbReference>
<dbReference type="InterPro" id="IPR023673">
    <property type="entry name" value="Ribosomal_uL1_CS"/>
</dbReference>
<dbReference type="NCBIfam" id="TIGR01169">
    <property type="entry name" value="rplA_bact"/>
    <property type="match status" value="1"/>
</dbReference>
<dbReference type="PANTHER" id="PTHR36427">
    <property type="entry name" value="54S RIBOSOMAL PROTEIN L1, MITOCHONDRIAL"/>
    <property type="match status" value="1"/>
</dbReference>
<dbReference type="PANTHER" id="PTHR36427:SF3">
    <property type="entry name" value="LARGE RIBOSOMAL SUBUNIT PROTEIN UL1M"/>
    <property type="match status" value="1"/>
</dbReference>
<dbReference type="Pfam" id="PF00687">
    <property type="entry name" value="Ribosomal_L1"/>
    <property type="match status" value="1"/>
</dbReference>
<dbReference type="PIRSF" id="PIRSF002155">
    <property type="entry name" value="Ribosomal_L1"/>
    <property type="match status" value="1"/>
</dbReference>
<dbReference type="SUPFAM" id="SSF56808">
    <property type="entry name" value="Ribosomal protein L1"/>
    <property type="match status" value="1"/>
</dbReference>
<dbReference type="PROSITE" id="PS01199">
    <property type="entry name" value="RIBOSOMAL_L1"/>
    <property type="match status" value="1"/>
</dbReference>
<reference key="1">
    <citation type="journal article" date="2005" name="Proc. Natl. Acad. Sci. U.S.A.">
        <title>The psychrophilic lifestyle as revealed by the genome sequence of Colwellia psychrerythraea 34H through genomic and proteomic analyses.</title>
        <authorList>
            <person name="Methe B.A."/>
            <person name="Nelson K.E."/>
            <person name="Deming J.W."/>
            <person name="Momen B."/>
            <person name="Melamud E."/>
            <person name="Zhang X."/>
            <person name="Moult J."/>
            <person name="Madupu R."/>
            <person name="Nelson W.C."/>
            <person name="Dodson R.J."/>
            <person name="Brinkac L.M."/>
            <person name="Daugherty S.C."/>
            <person name="Durkin A.S."/>
            <person name="DeBoy R.T."/>
            <person name="Kolonay J.F."/>
            <person name="Sullivan S.A."/>
            <person name="Zhou L."/>
            <person name="Davidsen T.M."/>
            <person name="Wu M."/>
            <person name="Huston A.L."/>
            <person name="Lewis M."/>
            <person name="Weaver B."/>
            <person name="Weidman J.F."/>
            <person name="Khouri H."/>
            <person name="Utterback T.R."/>
            <person name="Feldblyum T.V."/>
            <person name="Fraser C.M."/>
        </authorList>
    </citation>
    <scope>NUCLEOTIDE SEQUENCE [LARGE SCALE GENOMIC DNA]</scope>
    <source>
        <strain>34H / ATCC BAA-681</strain>
    </source>
</reference>
<comment type="function">
    <text evidence="1">Binds directly to 23S rRNA. The L1 stalk is quite mobile in the ribosome, and is involved in E site tRNA release.</text>
</comment>
<comment type="function">
    <text evidence="1">Protein L1 is also a translational repressor protein, it controls the translation of the L11 operon by binding to its mRNA.</text>
</comment>
<comment type="subunit">
    <text evidence="1">Part of the 50S ribosomal subunit.</text>
</comment>
<comment type="similarity">
    <text evidence="1">Belongs to the universal ribosomal protein uL1 family.</text>
</comment>
<evidence type="ECO:0000255" key="1">
    <source>
        <dbReference type="HAMAP-Rule" id="MF_01318"/>
    </source>
</evidence>
<evidence type="ECO:0000305" key="2"/>
<gene>
    <name evidence="1" type="primary">rplA</name>
    <name type="ordered locus">CPS_4772</name>
</gene>
<accession>Q47UV6</accession>
<proteinExistence type="inferred from homology"/>
<feature type="chain" id="PRO_0000230602" description="Large ribosomal subunit protein uL1">
    <location>
        <begin position="1"/>
        <end position="232"/>
    </location>
</feature>
<name>RL1_COLP3</name>
<protein>
    <recommendedName>
        <fullName evidence="1">Large ribosomal subunit protein uL1</fullName>
    </recommendedName>
    <alternativeName>
        <fullName evidence="2">50S ribosomal protein L1</fullName>
    </alternativeName>
</protein>
<organism>
    <name type="scientific">Colwellia psychrerythraea (strain 34H / ATCC BAA-681)</name>
    <name type="common">Vibrio psychroerythus</name>
    <dbReference type="NCBI Taxonomy" id="167879"/>
    <lineage>
        <taxon>Bacteria</taxon>
        <taxon>Pseudomonadati</taxon>
        <taxon>Pseudomonadota</taxon>
        <taxon>Gammaproteobacteria</taxon>
        <taxon>Alteromonadales</taxon>
        <taxon>Colwelliaceae</taxon>
        <taxon>Colwellia</taxon>
    </lineage>
</organism>
<keyword id="KW-0678">Repressor</keyword>
<keyword id="KW-0687">Ribonucleoprotein</keyword>
<keyword id="KW-0689">Ribosomal protein</keyword>
<keyword id="KW-0694">RNA-binding</keyword>
<keyword id="KW-0699">rRNA-binding</keyword>
<keyword id="KW-0810">Translation regulation</keyword>
<keyword id="KW-0820">tRNA-binding</keyword>